<sequence length="329" mass="36512">MQGSVTEFLKPRLVDIEQVSSTHAKVTLEPLERGFGHTLGNALRRILLSSMPGCAVTEVEIDGVLHEYSTKEGVQEDILEILLNLKGLAVRVQGKDEVILTLNKSGIGPVTAADITHDGDVEIVKPQHVICHLTDENASISMRIKVQRGRGYVPASTRIHSEEDERPIGRLLVDACYSPVERIAYNVEAARVEQRTDLDKLVIEMETNGTIDPEEAIRRAATILAEQLEAFVDLRDVRQPEVKEEKPEFDPILLRPVDDLELTVRSANCLKAEAIHYIGDLVQRTEVELLKTPNLGKKSLTEIKDVLASRGLSLGMRLENWPPASIADE</sequence>
<proteinExistence type="inferred from homology"/>
<comment type="function">
    <text evidence="1">DNA-dependent RNA polymerase catalyzes the transcription of DNA into RNA using the four ribonucleoside triphosphates as substrates.</text>
</comment>
<comment type="catalytic activity">
    <reaction>
        <text>RNA(n) + a ribonucleoside 5'-triphosphate = RNA(n+1) + diphosphate</text>
        <dbReference type="Rhea" id="RHEA:21248"/>
        <dbReference type="Rhea" id="RHEA-COMP:14527"/>
        <dbReference type="Rhea" id="RHEA-COMP:17342"/>
        <dbReference type="ChEBI" id="CHEBI:33019"/>
        <dbReference type="ChEBI" id="CHEBI:61557"/>
        <dbReference type="ChEBI" id="CHEBI:140395"/>
        <dbReference type="EC" id="2.7.7.6"/>
    </reaction>
</comment>
<comment type="subunit">
    <text evidence="1">Homodimer. The RNAP catalytic core consists of 2 alpha, 1 beta, 1 beta' and 1 omega subunit. When a sigma factor is associated with the core the holoenzyme is formed, which can initiate transcription (By similarity).</text>
</comment>
<comment type="domain">
    <text evidence="1">The N-terminal domain is essential for RNAP assembly and basal transcription, whereas the C-terminal domain is involved in interaction with transcriptional regulators and with upstream promoter elements.</text>
</comment>
<comment type="similarity">
    <text evidence="2">Belongs to the RNA polymerase alpha chain family.</text>
</comment>
<protein>
    <recommendedName>
        <fullName>DNA-directed RNA polymerase subunit alpha</fullName>
        <shortName>RNAP subunit alpha</shortName>
        <ecNumber>2.7.7.6</ecNumber>
    </recommendedName>
    <alternativeName>
        <fullName>RNA polymerase subunit alpha</fullName>
    </alternativeName>
    <alternativeName>
        <fullName>Transcriptase subunit alpha</fullName>
    </alternativeName>
</protein>
<gene>
    <name type="primary">rpoA</name>
    <name type="ordered locus">SF3327</name>
    <name type="ordered locus">S4435</name>
</gene>
<feature type="chain" id="PRO_0000175377" description="DNA-directed RNA polymerase subunit alpha">
    <location>
        <begin position="1"/>
        <end position="329"/>
    </location>
</feature>
<feature type="region of interest" description="Alpha N-terminal domain (alpha-NTD)" evidence="1">
    <location>
        <begin position="1"/>
        <end position="235"/>
    </location>
</feature>
<feature type="region of interest" description="Alpha C-terminal domain (alpha-CTD)" evidence="1">
    <location>
        <begin position="249"/>
        <end position="329"/>
    </location>
</feature>
<evidence type="ECO:0000250" key="1"/>
<evidence type="ECO:0000305" key="2"/>
<keyword id="KW-0240">DNA-directed RNA polymerase</keyword>
<keyword id="KW-0548">Nucleotidyltransferase</keyword>
<keyword id="KW-1185">Reference proteome</keyword>
<keyword id="KW-0804">Transcription</keyword>
<keyword id="KW-0808">Transferase</keyword>
<accession>P0A7Z9</accession>
<accession>P00574</accession>
<reference key="1">
    <citation type="journal article" date="2002" name="Nucleic Acids Res.">
        <title>Genome sequence of Shigella flexneri 2a: insights into pathogenicity through comparison with genomes of Escherichia coli K12 and O157.</title>
        <authorList>
            <person name="Jin Q."/>
            <person name="Yuan Z."/>
            <person name="Xu J."/>
            <person name="Wang Y."/>
            <person name="Shen Y."/>
            <person name="Lu W."/>
            <person name="Wang J."/>
            <person name="Liu H."/>
            <person name="Yang J."/>
            <person name="Yang F."/>
            <person name="Zhang X."/>
            <person name="Zhang J."/>
            <person name="Yang G."/>
            <person name="Wu H."/>
            <person name="Qu D."/>
            <person name="Dong J."/>
            <person name="Sun L."/>
            <person name="Xue Y."/>
            <person name="Zhao A."/>
            <person name="Gao Y."/>
            <person name="Zhu J."/>
            <person name="Kan B."/>
            <person name="Ding K."/>
            <person name="Chen S."/>
            <person name="Cheng H."/>
            <person name="Yao Z."/>
            <person name="He B."/>
            <person name="Chen R."/>
            <person name="Ma D."/>
            <person name="Qiang B."/>
            <person name="Wen Y."/>
            <person name="Hou Y."/>
            <person name="Yu J."/>
        </authorList>
    </citation>
    <scope>NUCLEOTIDE SEQUENCE [LARGE SCALE GENOMIC DNA]</scope>
    <source>
        <strain>301 / Serotype 2a</strain>
    </source>
</reference>
<reference key="2">
    <citation type="journal article" date="2003" name="Infect. Immun.">
        <title>Complete genome sequence and comparative genomics of Shigella flexneri serotype 2a strain 2457T.</title>
        <authorList>
            <person name="Wei J."/>
            <person name="Goldberg M.B."/>
            <person name="Burland V."/>
            <person name="Venkatesan M.M."/>
            <person name="Deng W."/>
            <person name="Fournier G."/>
            <person name="Mayhew G.F."/>
            <person name="Plunkett G. III"/>
            <person name="Rose D.J."/>
            <person name="Darling A."/>
            <person name="Mau B."/>
            <person name="Perna N.T."/>
            <person name="Payne S.M."/>
            <person name="Runyen-Janecky L.J."/>
            <person name="Zhou S."/>
            <person name="Schwartz D.C."/>
            <person name="Blattner F.R."/>
        </authorList>
    </citation>
    <scope>NUCLEOTIDE SEQUENCE [LARGE SCALE GENOMIC DNA]</scope>
    <source>
        <strain>ATCC 700930 / 2457T / Serotype 2a</strain>
    </source>
</reference>
<organism>
    <name type="scientific">Shigella flexneri</name>
    <dbReference type="NCBI Taxonomy" id="623"/>
    <lineage>
        <taxon>Bacteria</taxon>
        <taxon>Pseudomonadati</taxon>
        <taxon>Pseudomonadota</taxon>
        <taxon>Gammaproteobacteria</taxon>
        <taxon>Enterobacterales</taxon>
        <taxon>Enterobacteriaceae</taxon>
        <taxon>Shigella</taxon>
    </lineage>
</organism>
<dbReference type="EC" id="2.7.7.6"/>
<dbReference type="EMBL" id="AE005674">
    <property type="protein sequence ID" value="AAN44790.1"/>
    <property type="molecule type" value="Genomic_DNA"/>
</dbReference>
<dbReference type="EMBL" id="AE014073">
    <property type="protein sequence ID" value="AAP19386.1"/>
    <property type="molecule type" value="Genomic_DNA"/>
</dbReference>
<dbReference type="RefSeq" id="NP_709083.1">
    <property type="nucleotide sequence ID" value="NC_004337.2"/>
</dbReference>
<dbReference type="RefSeq" id="WP_001162094.1">
    <property type="nucleotide sequence ID" value="NZ_WPGW01000088.1"/>
</dbReference>
<dbReference type="SMR" id="P0A7Z9"/>
<dbReference type="STRING" id="198214.SF3327"/>
<dbReference type="PaxDb" id="198214-SF3327"/>
<dbReference type="GeneID" id="1027027"/>
<dbReference type="GeneID" id="93778692"/>
<dbReference type="KEGG" id="sfl:SF3327"/>
<dbReference type="KEGG" id="sfx:S4435"/>
<dbReference type="PATRIC" id="fig|198214.7.peg.3936"/>
<dbReference type="HOGENOM" id="CLU_053084_0_0_6"/>
<dbReference type="Proteomes" id="UP000001006">
    <property type="component" value="Chromosome"/>
</dbReference>
<dbReference type="Proteomes" id="UP000002673">
    <property type="component" value="Chromosome"/>
</dbReference>
<dbReference type="GO" id="GO:0005737">
    <property type="term" value="C:cytoplasm"/>
    <property type="evidence" value="ECO:0007669"/>
    <property type="project" value="UniProtKB-ARBA"/>
</dbReference>
<dbReference type="GO" id="GO:0000428">
    <property type="term" value="C:DNA-directed RNA polymerase complex"/>
    <property type="evidence" value="ECO:0007669"/>
    <property type="project" value="UniProtKB-KW"/>
</dbReference>
<dbReference type="GO" id="GO:0003677">
    <property type="term" value="F:DNA binding"/>
    <property type="evidence" value="ECO:0007669"/>
    <property type="project" value="UniProtKB-UniRule"/>
</dbReference>
<dbReference type="GO" id="GO:0003899">
    <property type="term" value="F:DNA-directed RNA polymerase activity"/>
    <property type="evidence" value="ECO:0007669"/>
    <property type="project" value="UniProtKB-UniRule"/>
</dbReference>
<dbReference type="GO" id="GO:0046983">
    <property type="term" value="F:protein dimerization activity"/>
    <property type="evidence" value="ECO:0007669"/>
    <property type="project" value="InterPro"/>
</dbReference>
<dbReference type="GO" id="GO:0006351">
    <property type="term" value="P:DNA-templated transcription"/>
    <property type="evidence" value="ECO:0007669"/>
    <property type="project" value="UniProtKB-UniRule"/>
</dbReference>
<dbReference type="CDD" id="cd06928">
    <property type="entry name" value="RNAP_alpha_NTD"/>
    <property type="match status" value="1"/>
</dbReference>
<dbReference type="FunFam" id="1.10.150.20:FF:000001">
    <property type="entry name" value="DNA-directed RNA polymerase subunit alpha"/>
    <property type="match status" value="1"/>
</dbReference>
<dbReference type="FunFam" id="2.170.120.12:FF:000001">
    <property type="entry name" value="DNA-directed RNA polymerase subunit alpha"/>
    <property type="match status" value="1"/>
</dbReference>
<dbReference type="Gene3D" id="1.10.150.20">
    <property type="entry name" value="5' to 3' exonuclease, C-terminal subdomain"/>
    <property type="match status" value="1"/>
</dbReference>
<dbReference type="Gene3D" id="2.170.120.12">
    <property type="entry name" value="DNA-directed RNA polymerase, insert domain"/>
    <property type="match status" value="1"/>
</dbReference>
<dbReference type="Gene3D" id="3.30.1360.10">
    <property type="entry name" value="RNA polymerase, RBP11-like subunit"/>
    <property type="match status" value="1"/>
</dbReference>
<dbReference type="HAMAP" id="MF_00059">
    <property type="entry name" value="RNApol_bact_RpoA"/>
    <property type="match status" value="1"/>
</dbReference>
<dbReference type="InterPro" id="IPR011262">
    <property type="entry name" value="DNA-dir_RNA_pol_insert"/>
</dbReference>
<dbReference type="InterPro" id="IPR011263">
    <property type="entry name" value="DNA-dir_RNA_pol_RpoA/D/Rpb3"/>
</dbReference>
<dbReference type="InterPro" id="IPR011773">
    <property type="entry name" value="DNA-dir_RpoA"/>
</dbReference>
<dbReference type="InterPro" id="IPR036603">
    <property type="entry name" value="RBP11-like"/>
</dbReference>
<dbReference type="InterPro" id="IPR011260">
    <property type="entry name" value="RNAP_asu_C"/>
</dbReference>
<dbReference type="InterPro" id="IPR036643">
    <property type="entry name" value="RNApol_insert_sf"/>
</dbReference>
<dbReference type="NCBIfam" id="NF003513">
    <property type="entry name" value="PRK05182.1-2"/>
    <property type="match status" value="1"/>
</dbReference>
<dbReference type="NCBIfam" id="NF003519">
    <property type="entry name" value="PRK05182.2-5"/>
    <property type="match status" value="1"/>
</dbReference>
<dbReference type="NCBIfam" id="TIGR02027">
    <property type="entry name" value="rpoA"/>
    <property type="match status" value="1"/>
</dbReference>
<dbReference type="Pfam" id="PF01000">
    <property type="entry name" value="RNA_pol_A_bac"/>
    <property type="match status" value="1"/>
</dbReference>
<dbReference type="Pfam" id="PF03118">
    <property type="entry name" value="RNA_pol_A_CTD"/>
    <property type="match status" value="1"/>
</dbReference>
<dbReference type="Pfam" id="PF01193">
    <property type="entry name" value="RNA_pol_L"/>
    <property type="match status" value="1"/>
</dbReference>
<dbReference type="SMART" id="SM00662">
    <property type="entry name" value="RPOLD"/>
    <property type="match status" value="1"/>
</dbReference>
<dbReference type="SUPFAM" id="SSF47789">
    <property type="entry name" value="C-terminal domain of RNA polymerase alpha subunit"/>
    <property type="match status" value="1"/>
</dbReference>
<dbReference type="SUPFAM" id="SSF56553">
    <property type="entry name" value="Insert subdomain of RNA polymerase alpha subunit"/>
    <property type="match status" value="1"/>
</dbReference>
<dbReference type="SUPFAM" id="SSF55257">
    <property type="entry name" value="RBP11-like subunits of RNA polymerase"/>
    <property type="match status" value="1"/>
</dbReference>
<name>RPOA_SHIFL</name>